<name>CHDC_BACAA</name>
<sequence>MSEATTTLDGWYCLHDLRSIDWAAWKTLSSDERGQAVSEFLNVVEKWNDVAAAKKGSHAMYTVVGQKADIMLMILRPTMEELNEIETELNKTTLAEYMVPAYSYVSVVELSNYLPADEDPYQNPQILARLYPELPKANHICFYPMDKRRQGDDNWYMLPMEERKKMMYSHSKIGRQYAGKVRQVISGSVGFDDFEWGVTLFADDVLQFKKLIYEMRFDEVSARYGEFGTFFVGNILPDEKVEKFLHI</sequence>
<dbReference type="EC" id="1.3.98.5" evidence="1"/>
<dbReference type="EMBL" id="CP001598">
    <property type="protein sequence ID" value="ACQ48145.1"/>
    <property type="molecule type" value="Genomic_DNA"/>
</dbReference>
<dbReference type="SMR" id="C3P2E9"/>
<dbReference type="KEGG" id="bai:BAA_5664"/>
<dbReference type="HOGENOM" id="CLU_063226_1_0_9"/>
<dbReference type="UniPathway" id="UPA00252"/>
<dbReference type="GO" id="GO:0020037">
    <property type="term" value="F:heme binding"/>
    <property type="evidence" value="ECO:0007669"/>
    <property type="project" value="InterPro"/>
</dbReference>
<dbReference type="GO" id="GO:0046872">
    <property type="term" value="F:metal ion binding"/>
    <property type="evidence" value="ECO:0007669"/>
    <property type="project" value="UniProtKB-KW"/>
</dbReference>
<dbReference type="GO" id="GO:0016634">
    <property type="term" value="F:oxidoreductase activity, acting on the CH-CH group of donors, oxygen as acceptor"/>
    <property type="evidence" value="ECO:0007669"/>
    <property type="project" value="UniProtKB-UniRule"/>
</dbReference>
<dbReference type="GO" id="GO:0004601">
    <property type="term" value="F:peroxidase activity"/>
    <property type="evidence" value="ECO:0007669"/>
    <property type="project" value="InterPro"/>
</dbReference>
<dbReference type="GO" id="GO:0006785">
    <property type="term" value="P:heme B biosynthetic process"/>
    <property type="evidence" value="ECO:0007669"/>
    <property type="project" value="UniProtKB-UniRule"/>
</dbReference>
<dbReference type="Gene3D" id="3.30.70.1030">
    <property type="entry name" value="Apc35880, domain 1"/>
    <property type="match status" value="2"/>
</dbReference>
<dbReference type="HAMAP" id="MF_01442">
    <property type="entry name" value="Coproheme_decarbox_1"/>
    <property type="match status" value="1"/>
</dbReference>
<dbReference type="InterPro" id="IPR031332">
    <property type="entry name" value="CHDC"/>
</dbReference>
<dbReference type="InterPro" id="IPR010644">
    <property type="entry name" value="ChdC/CLD"/>
</dbReference>
<dbReference type="InterPro" id="IPR011008">
    <property type="entry name" value="Dimeric_a/b-barrel"/>
</dbReference>
<dbReference type="NCBIfam" id="NF008913">
    <property type="entry name" value="PRK12276.1"/>
    <property type="match status" value="1"/>
</dbReference>
<dbReference type="PANTHER" id="PTHR36843:SF1">
    <property type="entry name" value="COPROHEME DECARBOXYLASE"/>
    <property type="match status" value="1"/>
</dbReference>
<dbReference type="PANTHER" id="PTHR36843">
    <property type="entry name" value="HEME-DEPENDENT PEROXIDASE YWFI-RELATED"/>
    <property type="match status" value="1"/>
</dbReference>
<dbReference type="Pfam" id="PF06778">
    <property type="entry name" value="Chlor_dismutase"/>
    <property type="match status" value="1"/>
</dbReference>
<dbReference type="SUPFAM" id="SSF54909">
    <property type="entry name" value="Dimeric alpha+beta barrel"/>
    <property type="match status" value="1"/>
</dbReference>
<evidence type="ECO:0000255" key="1">
    <source>
        <dbReference type="HAMAP-Rule" id="MF_01442"/>
    </source>
</evidence>
<accession>C3P2E9</accession>
<reference key="1">
    <citation type="submission" date="2009-04" db="EMBL/GenBank/DDBJ databases">
        <title>Genome sequence of Bacillus anthracis A0248.</title>
        <authorList>
            <person name="Dodson R.J."/>
            <person name="Munk A.C."/>
            <person name="Bruce D."/>
            <person name="Detter C."/>
            <person name="Tapia R."/>
            <person name="Sutton G."/>
            <person name="Sims D."/>
            <person name="Brettin T."/>
        </authorList>
    </citation>
    <scope>NUCLEOTIDE SEQUENCE [LARGE SCALE GENOMIC DNA]</scope>
    <source>
        <strain>A0248</strain>
    </source>
</reference>
<keyword id="KW-0349">Heme</keyword>
<keyword id="KW-0350">Heme biosynthesis</keyword>
<keyword id="KW-0408">Iron</keyword>
<keyword id="KW-0479">Metal-binding</keyword>
<keyword id="KW-0560">Oxidoreductase</keyword>
<gene>
    <name evidence="1" type="primary">chdC</name>
    <name type="ordered locus">BAA_5664</name>
</gene>
<comment type="function">
    <text evidence="1">Involved in coproporphyrin-dependent heme b biosynthesis. Catalyzes the decarboxylation of Fe-coproporphyrin III (coproheme) to heme b (protoheme IX), the last step of the pathway. The reaction occurs in a stepwise manner with a three-propionate intermediate.</text>
</comment>
<comment type="catalytic activity">
    <reaction evidence="1">
        <text>Fe-coproporphyrin III + 2 H2O2 + 2 H(+) = heme b + 2 CO2 + 4 H2O</text>
        <dbReference type="Rhea" id="RHEA:56516"/>
        <dbReference type="ChEBI" id="CHEBI:15377"/>
        <dbReference type="ChEBI" id="CHEBI:15378"/>
        <dbReference type="ChEBI" id="CHEBI:16240"/>
        <dbReference type="ChEBI" id="CHEBI:16526"/>
        <dbReference type="ChEBI" id="CHEBI:60344"/>
        <dbReference type="ChEBI" id="CHEBI:68438"/>
        <dbReference type="EC" id="1.3.98.5"/>
    </reaction>
    <physiologicalReaction direction="left-to-right" evidence="1">
        <dbReference type="Rhea" id="RHEA:56517"/>
    </physiologicalReaction>
</comment>
<comment type="catalytic activity">
    <reaction evidence="1">
        <text>Fe-coproporphyrin III + H2O2 + H(+) = harderoheme III + CO2 + 2 H2O</text>
        <dbReference type="Rhea" id="RHEA:57940"/>
        <dbReference type="ChEBI" id="CHEBI:15377"/>
        <dbReference type="ChEBI" id="CHEBI:15378"/>
        <dbReference type="ChEBI" id="CHEBI:16240"/>
        <dbReference type="ChEBI" id="CHEBI:16526"/>
        <dbReference type="ChEBI" id="CHEBI:68438"/>
        <dbReference type="ChEBI" id="CHEBI:142463"/>
    </reaction>
    <physiologicalReaction direction="left-to-right" evidence="1">
        <dbReference type="Rhea" id="RHEA:57941"/>
    </physiologicalReaction>
</comment>
<comment type="catalytic activity">
    <reaction evidence="1">
        <text>harderoheme III + H2O2 + H(+) = heme b + CO2 + 2 H2O</text>
        <dbReference type="Rhea" id="RHEA:57944"/>
        <dbReference type="ChEBI" id="CHEBI:15377"/>
        <dbReference type="ChEBI" id="CHEBI:15378"/>
        <dbReference type="ChEBI" id="CHEBI:16240"/>
        <dbReference type="ChEBI" id="CHEBI:16526"/>
        <dbReference type="ChEBI" id="CHEBI:60344"/>
        <dbReference type="ChEBI" id="CHEBI:142463"/>
    </reaction>
    <physiologicalReaction direction="left-to-right" evidence="1">
        <dbReference type="Rhea" id="RHEA:57945"/>
    </physiologicalReaction>
</comment>
<comment type="cofactor">
    <cofactor evidence="1">
        <name>Fe-coproporphyrin III</name>
        <dbReference type="ChEBI" id="CHEBI:68438"/>
    </cofactor>
    <text evidence="1">Fe-coproporphyrin III acts both as a substrate and a redox cofactor.</text>
</comment>
<comment type="pathway">
    <text evidence="1">Porphyrin-containing compound metabolism; protoheme biosynthesis.</text>
</comment>
<comment type="similarity">
    <text evidence="1">Belongs to the ChdC family. Type 1 subfamily.</text>
</comment>
<feature type="chain" id="PRO_1000184935" description="Coproheme decarboxylase">
    <location>
        <begin position="1"/>
        <end position="247"/>
    </location>
</feature>
<feature type="active site" evidence="1">
    <location>
        <position position="143"/>
    </location>
</feature>
<feature type="binding site" evidence="1">
    <location>
        <position position="129"/>
    </location>
    <ligand>
        <name>Fe-coproporphyrin III</name>
        <dbReference type="ChEBI" id="CHEBI:68438"/>
    </ligand>
</feature>
<feature type="binding site" evidence="1">
    <location>
        <begin position="143"/>
        <end position="147"/>
    </location>
    <ligand>
        <name>Fe-coproporphyrin III</name>
        <dbReference type="ChEBI" id="CHEBI:68438"/>
    </ligand>
</feature>
<feature type="binding site" description="axial binding residue" evidence="1">
    <location>
        <position position="170"/>
    </location>
    <ligand>
        <name>Fe-coproporphyrin III</name>
        <dbReference type="ChEBI" id="CHEBI:68438"/>
    </ligand>
    <ligandPart>
        <name>Fe</name>
        <dbReference type="ChEBI" id="CHEBI:18248"/>
    </ligandPart>
</feature>
<feature type="binding site" evidence="1">
    <location>
        <position position="183"/>
    </location>
    <ligand>
        <name>Fe-coproporphyrin III</name>
        <dbReference type="ChEBI" id="CHEBI:68438"/>
    </ligand>
</feature>
<feature type="binding site" evidence="1">
    <location>
        <position position="221"/>
    </location>
    <ligand>
        <name>Fe-coproporphyrin III</name>
        <dbReference type="ChEBI" id="CHEBI:68438"/>
    </ligand>
</feature>
<protein>
    <recommendedName>
        <fullName evidence="1">Coproheme decarboxylase</fullName>
        <ecNumber evidence="1">1.3.98.5</ecNumber>
    </recommendedName>
    <alternativeName>
        <fullName evidence="1">Coproheme III oxidative decarboxylase</fullName>
    </alternativeName>
    <alternativeName>
        <fullName evidence="1">Hydrogen peroxide-dependent heme synthase</fullName>
    </alternativeName>
</protein>
<organism>
    <name type="scientific">Bacillus anthracis (strain A0248)</name>
    <dbReference type="NCBI Taxonomy" id="592021"/>
    <lineage>
        <taxon>Bacteria</taxon>
        <taxon>Bacillati</taxon>
        <taxon>Bacillota</taxon>
        <taxon>Bacilli</taxon>
        <taxon>Bacillales</taxon>
        <taxon>Bacillaceae</taxon>
        <taxon>Bacillus</taxon>
        <taxon>Bacillus cereus group</taxon>
    </lineage>
</organism>
<proteinExistence type="inferred from homology"/>